<evidence type="ECO:0000255" key="1">
    <source>
        <dbReference type="HAMAP-Rule" id="MF_01067"/>
    </source>
</evidence>
<gene>
    <name type="ordered locus">CKO_01332</name>
</gene>
<dbReference type="EMBL" id="CP000822">
    <property type="protein sequence ID" value="ABV12469.1"/>
    <property type="molecule type" value="Genomic_DNA"/>
</dbReference>
<dbReference type="RefSeq" id="WP_012132212.1">
    <property type="nucleotide sequence ID" value="NC_009792.1"/>
</dbReference>
<dbReference type="STRING" id="290338.CKO_01332"/>
<dbReference type="GeneID" id="45135438"/>
<dbReference type="KEGG" id="cko:CKO_01332"/>
<dbReference type="HOGENOM" id="CLU_073287_0_0_6"/>
<dbReference type="OrthoDB" id="6454524at2"/>
<dbReference type="Proteomes" id="UP000008148">
    <property type="component" value="Chromosome"/>
</dbReference>
<dbReference type="GO" id="GO:0005886">
    <property type="term" value="C:plasma membrane"/>
    <property type="evidence" value="ECO:0007669"/>
    <property type="project" value="UniProtKB-SubCell"/>
</dbReference>
<dbReference type="HAMAP" id="MF_01067">
    <property type="entry name" value="UPF0259"/>
    <property type="match status" value="1"/>
</dbReference>
<dbReference type="InterPro" id="IPR009627">
    <property type="entry name" value="UPF0259"/>
</dbReference>
<dbReference type="NCBIfam" id="NF002774">
    <property type="entry name" value="PRK02868.1"/>
    <property type="match status" value="1"/>
</dbReference>
<dbReference type="Pfam" id="PF06790">
    <property type="entry name" value="UPF0259"/>
    <property type="match status" value="1"/>
</dbReference>
<accession>A8AG56</accession>
<reference key="1">
    <citation type="submission" date="2007-08" db="EMBL/GenBank/DDBJ databases">
        <authorList>
            <consortium name="The Citrobacter koseri Genome Sequencing Project"/>
            <person name="McClelland M."/>
            <person name="Sanderson E.K."/>
            <person name="Porwollik S."/>
            <person name="Spieth J."/>
            <person name="Clifton W.S."/>
            <person name="Latreille P."/>
            <person name="Courtney L."/>
            <person name="Wang C."/>
            <person name="Pepin K."/>
            <person name="Bhonagiri V."/>
            <person name="Nash W."/>
            <person name="Johnson M."/>
            <person name="Thiruvilangam P."/>
            <person name="Wilson R."/>
        </authorList>
    </citation>
    <scope>NUCLEOTIDE SEQUENCE [LARGE SCALE GENOMIC DNA]</scope>
    <source>
        <strain>ATCC BAA-895 / CDC 4225-83 / SGSC4696</strain>
    </source>
</reference>
<protein>
    <recommendedName>
        <fullName evidence="1">UPF0259 membrane protein CKO_01332</fullName>
    </recommendedName>
</protein>
<sequence length="247" mass="26459">MSITAKSVYRDTGNFFRNQFVTILLVSLLCAFITVVLGHAFSPSDAQIAQLSEGDHLTGSVGLFDLVQNMTPEQQQILLRASAASTFSGLIGNAILAGGVLLMIQLISAGHRVSALRAIGASAPVLPKLFVLIFLTTLLVQIGIMLIVVPGILMAILLALAPVMLVQDKMGVFAAMRNSMRLAWSNMRLVAPAVIGWLLAKTLLLLFAPSFAALTPNVGAVLANTLSNLISAILLIYLFRLYMLIRQ</sequence>
<feature type="chain" id="PRO_1000064519" description="UPF0259 membrane protein CKO_01332">
    <location>
        <begin position="1"/>
        <end position="247"/>
    </location>
</feature>
<feature type="transmembrane region" description="Helical" evidence="1">
    <location>
        <begin position="20"/>
        <end position="40"/>
    </location>
</feature>
<feature type="transmembrane region" description="Helical" evidence="1">
    <location>
        <begin position="87"/>
        <end position="107"/>
    </location>
</feature>
<feature type="transmembrane region" description="Helical" evidence="1">
    <location>
        <begin position="118"/>
        <end position="140"/>
    </location>
</feature>
<feature type="transmembrane region" description="Helical" evidence="1">
    <location>
        <begin position="152"/>
        <end position="172"/>
    </location>
</feature>
<feature type="transmembrane region" description="Helical" evidence="1">
    <location>
        <begin position="189"/>
        <end position="209"/>
    </location>
</feature>
<feature type="transmembrane region" description="Helical" evidence="1">
    <location>
        <begin position="219"/>
        <end position="239"/>
    </location>
</feature>
<keyword id="KW-0997">Cell inner membrane</keyword>
<keyword id="KW-1003">Cell membrane</keyword>
<keyword id="KW-0472">Membrane</keyword>
<keyword id="KW-1185">Reference proteome</keyword>
<keyword id="KW-0812">Transmembrane</keyword>
<keyword id="KW-1133">Transmembrane helix</keyword>
<proteinExistence type="inferred from homology"/>
<comment type="subcellular location">
    <subcellularLocation>
        <location evidence="1">Cell inner membrane</location>
        <topology evidence="1">Multi-pass membrane protein</topology>
    </subcellularLocation>
</comment>
<comment type="similarity">
    <text evidence="1">Belongs to the UPF0259 family.</text>
</comment>
<name>Y1332_CITK8</name>
<organism>
    <name type="scientific">Citrobacter koseri (strain ATCC BAA-895 / CDC 4225-83 / SGSC4696)</name>
    <dbReference type="NCBI Taxonomy" id="290338"/>
    <lineage>
        <taxon>Bacteria</taxon>
        <taxon>Pseudomonadati</taxon>
        <taxon>Pseudomonadota</taxon>
        <taxon>Gammaproteobacteria</taxon>
        <taxon>Enterobacterales</taxon>
        <taxon>Enterobacteriaceae</taxon>
        <taxon>Citrobacter</taxon>
    </lineage>
</organism>